<evidence type="ECO:0000255" key="1">
    <source>
        <dbReference type="HAMAP-Rule" id="MF_01218"/>
    </source>
</evidence>
<protein>
    <recommendedName>
        <fullName evidence="1">Uracil phosphoribosyltransferase</fullName>
        <ecNumber evidence="1">2.4.2.9</ecNumber>
    </recommendedName>
    <alternativeName>
        <fullName evidence="1">UMP pyrophosphorylase</fullName>
    </alternativeName>
    <alternativeName>
        <fullName evidence="1">UPRTase</fullName>
    </alternativeName>
</protein>
<name>UPP_YERE8</name>
<organism>
    <name type="scientific">Yersinia enterocolitica serotype O:8 / biotype 1B (strain NCTC 13174 / 8081)</name>
    <dbReference type="NCBI Taxonomy" id="393305"/>
    <lineage>
        <taxon>Bacteria</taxon>
        <taxon>Pseudomonadati</taxon>
        <taxon>Pseudomonadota</taxon>
        <taxon>Gammaproteobacteria</taxon>
        <taxon>Enterobacterales</taxon>
        <taxon>Yersiniaceae</taxon>
        <taxon>Yersinia</taxon>
    </lineage>
</organism>
<comment type="function">
    <text evidence="1">Catalyzes the conversion of uracil and 5-phospho-alpha-D-ribose 1-diphosphate (PRPP) to UMP and diphosphate.</text>
</comment>
<comment type="catalytic activity">
    <reaction evidence="1">
        <text>UMP + diphosphate = 5-phospho-alpha-D-ribose 1-diphosphate + uracil</text>
        <dbReference type="Rhea" id="RHEA:13017"/>
        <dbReference type="ChEBI" id="CHEBI:17568"/>
        <dbReference type="ChEBI" id="CHEBI:33019"/>
        <dbReference type="ChEBI" id="CHEBI:57865"/>
        <dbReference type="ChEBI" id="CHEBI:58017"/>
        <dbReference type="EC" id="2.4.2.9"/>
    </reaction>
</comment>
<comment type="cofactor">
    <cofactor evidence="1">
        <name>Mg(2+)</name>
        <dbReference type="ChEBI" id="CHEBI:18420"/>
    </cofactor>
    <text evidence="1">Binds 1 Mg(2+) ion per subunit. The magnesium is bound as Mg-PRPP.</text>
</comment>
<comment type="activity regulation">
    <text evidence="1">Allosterically activated by GTP.</text>
</comment>
<comment type="pathway">
    <text evidence="1">Pyrimidine metabolism; UMP biosynthesis via salvage pathway; UMP from uracil: step 1/1.</text>
</comment>
<comment type="similarity">
    <text evidence="1">Belongs to the UPRTase family.</text>
</comment>
<keyword id="KW-0021">Allosteric enzyme</keyword>
<keyword id="KW-0328">Glycosyltransferase</keyword>
<keyword id="KW-0342">GTP-binding</keyword>
<keyword id="KW-0460">Magnesium</keyword>
<keyword id="KW-0547">Nucleotide-binding</keyword>
<keyword id="KW-0808">Transferase</keyword>
<gene>
    <name evidence="1" type="primary">upp</name>
    <name type="ordered locus">YE1128</name>
</gene>
<sequence>MKIVEVKHPLVKHKLGLMRENDISTKRFRELASEVGSLLTYVATADLETEKVTIEGWNGPVEIEQIKGKKITVVPILRAGLGMMEGVLENVPSARISVVGVYRDEETLKPVPYFQKLVSNIDERMALVVDPMLATGGSMIATIDLLKKAGCKSIKVLVLVAAPEGIKALEAAHPDVELYTASIDQGLNEHGYIIPGLGDAGDKIFGTK</sequence>
<feature type="chain" id="PRO_1000053813" description="Uracil phosphoribosyltransferase">
    <location>
        <begin position="1"/>
        <end position="208"/>
    </location>
</feature>
<feature type="binding site" evidence="1">
    <location>
        <position position="78"/>
    </location>
    <ligand>
        <name>5-phospho-alpha-D-ribose 1-diphosphate</name>
        <dbReference type="ChEBI" id="CHEBI:58017"/>
    </ligand>
</feature>
<feature type="binding site" evidence="1">
    <location>
        <position position="103"/>
    </location>
    <ligand>
        <name>5-phospho-alpha-D-ribose 1-diphosphate</name>
        <dbReference type="ChEBI" id="CHEBI:58017"/>
    </ligand>
</feature>
<feature type="binding site" evidence="1">
    <location>
        <begin position="130"/>
        <end position="138"/>
    </location>
    <ligand>
        <name>5-phospho-alpha-D-ribose 1-diphosphate</name>
        <dbReference type="ChEBI" id="CHEBI:58017"/>
    </ligand>
</feature>
<feature type="binding site" evidence="1">
    <location>
        <position position="193"/>
    </location>
    <ligand>
        <name>uracil</name>
        <dbReference type="ChEBI" id="CHEBI:17568"/>
    </ligand>
</feature>
<feature type="binding site" evidence="1">
    <location>
        <begin position="198"/>
        <end position="200"/>
    </location>
    <ligand>
        <name>uracil</name>
        <dbReference type="ChEBI" id="CHEBI:17568"/>
    </ligand>
</feature>
<feature type="binding site" evidence="1">
    <location>
        <position position="199"/>
    </location>
    <ligand>
        <name>5-phospho-alpha-D-ribose 1-diphosphate</name>
        <dbReference type="ChEBI" id="CHEBI:58017"/>
    </ligand>
</feature>
<proteinExistence type="inferred from homology"/>
<dbReference type="EC" id="2.4.2.9" evidence="1"/>
<dbReference type="EMBL" id="AM286415">
    <property type="protein sequence ID" value="CAL11223.1"/>
    <property type="molecule type" value="Genomic_DNA"/>
</dbReference>
<dbReference type="RefSeq" id="WP_005162121.1">
    <property type="nucleotide sequence ID" value="NC_008800.1"/>
</dbReference>
<dbReference type="RefSeq" id="YP_001005456.1">
    <property type="nucleotide sequence ID" value="NC_008800.1"/>
</dbReference>
<dbReference type="SMR" id="A1JKZ8"/>
<dbReference type="GeneID" id="93969813"/>
<dbReference type="KEGG" id="yen:YE1128"/>
<dbReference type="PATRIC" id="fig|393305.7.peg.1229"/>
<dbReference type="eggNOG" id="COG0035">
    <property type="taxonomic scope" value="Bacteria"/>
</dbReference>
<dbReference type="HOGENOM" id="CLU_067096_2_2_6"/>
<dbReference type="OrthoDB" id="9781675at2"/>
<dbReference type="UniPathway" id="UPA00574">
    <property type="reaction ID" value="UER00636"/>
</dbReference>
<dbReference type="Proteomes" id="UP000000642">
    <property type="component" value="Chromosome"/>
</dbReference>
<dbReference type="GO" id="GO:0005525">
    <property type="term" value="F:GTP binding"/>
    <property type="evidence" value="ECO:0007669"/>
    <property type="project" value="UniProtKB-KW"/>
</dbReference>
<dbReference type="GO" id="GO:0000287">
    <property type="term" value="F:magnesium ion binding"/>
    <property type="evidence" value="ECO:0007669"/>
    <property type="project" value="UniProtKB-UniRule"/>
</dbReference>
<dbReference type="GO" id="GO:0004845">
    <property type="term" value="F:uracil phosphoribosyltransferase activity"/>
    <property type="evidence" value="ECO:0007669"/>
    <property type="project" value="UniProtKB-UniRule"/>
</dbReference>
<dbReference type="GO" id="GO:0044206">
    <property type="term" value="P:UMP salvage"/>
    <property type="evidence" value="ECO:0007669"/>
    <property type="project" value="UniProtKB-UniRule"/>
</dbReference>
<dbReference type="GO" id="GO:0006223">
    <property type="term" value="P:uracil salvage"/>
    <property type="evidence" value="ECO:0007669"/>
    <property type="project" value="InterPro"/>
</dbReference>
<dbReference type="CDD" id="cd06223">
    <property type="entry name" value="PRTases_typeI"/>
    <property type="match status" value="1"/>
</dbReference>
<dbReference type="FunFam" id="3.40.50.2020:FF:000003">
    <property type="entry name" value="Uracil phosphoribosyltransferase"/>
    <property type="match status" value="1"/>
</dbReference>
<dbReference type="Gene3D" id="3.40.50.2020">
    <property type="match status" value="1"/>
</dbReference>
<dbReference type="HAMAP" id="MF_01218_B">
    <property type="entry name" value="Upp_B"/>
    <property type="match status" value="1"/>
</dbReference>
<dbReference type="InterPro" id="IPR000836">
    <property type="entry name" value="PRibTrfase_dom"/>
</dbReference>
<dbReference type="InterPro" id="IPR029057">
    <property type="entry name" value="PRTase-like"/>
</dbReference>
<dbReference type="InterPro" id="IPR034332">
    <property type="entry name" value="Upp_B"/>
</dbReference>
<dbReference type="InterPro" id="IPR050054">
    <property type="entry name" value="UPRTase/APRTase"/>
</dbReference>
<dbReference type="InterPro" id="IPR005765">
    <property type="entry name" value="Ura_phspho_trans"/>
</dbReference>
<dbReference type="NCBIfam" id="NF001097">
    <property type="entry name" value="PRK00129.1"/>
    <property type="match status" value="1"/>
</dbReference>
<dbReference type="NCBIfam" id="TIGR01091">
    <property type="entry name" value="upp"/>
    <property type="match status" value="1"/>
</dbReference>
<dbReference type="PANTHER" id="PTHR32315">
    <property type="entry name" value="ADENINE PHOSPHORIBOSYLTRANSFERASE"/>
    <property type="match status" value="1"/>
</dbReference>
<dbReference type="PANTHER" id="PTHR32315:SF4">
    <property type="entry name" value="URACIL PHOSPHORIBOSYLTRANSFERASE, CHLOROPLASTIC"/>
    <property type="match status" value="1"/>
</dbReference>
<dbReference type="Pfam" id="PF14681">
    <property type="entry name" value="UPRTase"/>
    <property type="match status" value="1"/>
</dbReference>
<dbReference type="SUPFAM" id="SSF53271">
    <property type="entry name" value="PRTase-like"/>
    <property type="match status" value="1"/>
</dbReference>
<accession>A1JKZ8</accession>
<reference key="1">
    <citation type="journal article" date="2006" name="PLoS Genet.">
        <title>The complete genome sequence and comparative genome analysis of the high pathogenicity Yersinia enterocolitica strain 8081.</title>
        <authorList>
            <person name="Thomson N.R."/>
            <person name="Howard S."/>
            <person name="Wren B.W."/>
            <person name="Holden M.T.G."/>
            <person name="Crossman L."/>
            <person name="Challis G.L."/>
            <person name="Churcher C."/>
            <person name="Mungall K."/>
            <person name="Brooks K."/>
            <person name="Chillingworth T."/>
            <person name="Feltwell T."/>
            <person name="Abdellah Z."/>
            <person name="Hauser H."/>
            <person name="Jagels K."/>
            <person name="Maddison M."/>
            <person name="Moule S."/>
            <person name="Sanders M."/>
            <person name="Whitehead S."/>
            <person name="Quail M.A."/>
            <person name="Dougan G."/>
            <person name="Parkhill J."/>
            <person name="Prentice M.B."/>
        </authorList>
    </citation>
    <scope>NUCLEOTIDE SEQUENCE [LARGE SCALE GENOMIC DNA]</scope>
    <source>
        <strain>NCTC 13174 / 8081</strain>
    </source>
</reference>